<keyword id="KW-0002">3D-structure</keyword>
<keyword id="KW-0178">Competence</keyword>
<keyword id="KW-1185">Reference proteome</keyword>
<comment type="function">
    <text evidence="4">Involved in transformation (genetic competence for DNA uptake).</text>
</comment>
<comment type="induction">
    <text evidence="1">Part of the comF operon, encoding comFA, comFB and comFC, transcribed in competence media (minimal salts plus glucose) once stationary phase is reached (PubMed:8412657).</text>
</comment>
<comment type="disruption phenotype">
    <text evidence="1">10-fold decrease in transformation efficiency.</text>
</comment>
<organism>
    <name type="scientific">Bacillus subtilis (strain 168)</name>
    <dbReference type="NCBI Taxonomy" id="224308"/>
    <lineage>
        <taxon>Bacteria</taxon>
        <taxon>Bacillati</taxon>
        <taxon>Bacillota</taxon>
        <taxon>Bacilli</taxon>
        <taxon>Bacillales</taxon>
        <taxon>Bacillaceae</taxon>
        <taxon>Bacillus</taxon>
    </lineage>
</organism>
<accession>P39146</accession>
<reference key="1">
    <citation type="journal article" date="1993" name="Mol. Microbiol.">
        <title>comF, a Bacillus subtilis late competence locus, encodes a protein similar to ATP-dependent RNA/DNA helicases.</title>
        <authorList>
            <person name="Londono-Vallejo J.A."/>
            <person name="Dubnau D."/>
        </authorList>
    </citation>
    <scope>NUCLEOTIDE SEQUENCE [GENOMIC DNA]</scope>
    <scope>FUNCTION</scope>
    <scope>INDUCTION</scope>
    <scope>DISRUPTION PHENOTYPE</scope>
    <source>
        <strain>168</strain>
    </source>
</reference>
<reference key="2">
    <citation type="journal article" date="1996" name="Microbiology">
        <title>Sequence of the 305 degrees-307 degrees region of the Bacillus subtilis chromosome.</title>
        <authorList>
            <person name="Soldo B."/>
            <person name="Lazarevic V."/>
            <person name="Mauel C."/>
            <person name="Karamata D."/>
        </authorList>
    </citation>
    <scope>NUCLEOTIDE SEQUENCE [GENOMIC DNA]</scope>
    <source>
        <strain>168</strain>
    </source>
</reference>
<reference key="3">
    <citation type="journal article" date="1997" name="Nature">
        <title>The complete genome sequence of the Gram-positive bacterium Bacillus subtilis.</title>
        <authorList>
            <person name="Kunst F."/>
            <person name="Ogasawara N."/>
            <person name="Moszer I."/>
            <person name="Albertini A.M."/>
            <person name="Alloni G."/>
            <person name="Azevedo V."/>
            <person name="Bertero M.G."/>
            <person name="Bessieres P."/>
            <person name="Bolotin A."/>
            <person name="Borchert S."/>
            <person name="Borriss R."/>
            <person name="Boursier L."/>
            <person name="Brans A."/>
            <person name="Braun M."/>
            <person name="Brignell S.C."/>
            <person name="Bron S."/>
            <person name="Brouillet S."/>
            <person name="Bruschi C.V."/>
            <person name="Caldwell B."/>
            <person name="Capuano V."/>
            <person name="Carter N.M."/>
            <person name="Choi S.-K."/>
            <person name="Codani J.-J."/>
            <person name="Connerton I.F."/>
            <person name="Cummings N.J."/>
            <person name="Daniel R.A."/>
            <person name="Denizot F."/>
            <person name="Devine K.M."/>
            <person name="Duesterhoeft A."/>
            <person name="Ehrlich S.D."/>
            <person name="Emmerson P.T."/>
            <person name="Entian K.-D."/>
            <person name="Errington J."/>
            <person name="Fabret C."/>
            <person name="Ferrari E."/>
            <person name="Foulger D."/>
            <person name="Fritz C."/>
            <person name="Fujita M."/>
            <person name="Fujita Y."/>
            <person name="Fuma S."/>
            <person name="Galizzi A."/>
            <person name="Galleron N."/>
            <person name="Ghim S.-Y."/>
            <person name="Glaser P."/>
            <person name="Goffeau A."/>
            <person name="Golightly E.J."/>
            <person name="Grandi G."/>
            <person name="Guiseppi G."/>
            <person name="Guy B.J."/>
            <person name="Haga K."/>
            <person name="Haiech J."/>
            <person name="Harwood C.R."/>
            <person name="Henaut A."/>
            <person name="Hilbert H."/>
            <person name="Holsappel S."/>
            <person name="Hosono S."/>
            <person name="Hullo M.-F."/>
            <person name="Itaya M."/>
            <person name="Jones L.-M."/>
            <person name="Joris B."/>
            <person name="Karamata D."/>
            <person name="Kasahara Y."/>
            <person name="Klaerr-Blanchard M."/>
            <person name="Klein C."/>
            <person name="Kobayashi Y."/>
            <person name="Koetter P."/>
            <person name="Koningstein G."/>
            <person name="Krogh S."/>
            <person name="Kumano M."/>
            <person name="Kurita K."/>
            <person name="Lapidus A."/>
            <person name="Lardinois S."/>
            <person name="Lauber J."/>
            <person name="Lazarevic V."/>
            <person name="Lee S.-M."/>
            <person name="Levine A."/>
            <person name="Liu H."/>
            <person name="Masuda S."/>
            <person name="Mauel C."/>
            <person name="Medigue C."/>
            <person name="Medina N."/>
            <person name="Mellado R.P."/>
            <person name="Mizuno M."/>
            <person name="Moestl D."/>
            <person name="Nakai S."/>
            <person name="Noback M."/>
            <person name="Noone D."/>
            <person name="O'Reilly M."/>
            <person name="Ogawa K."/>
            <person name="Ogiwara A."/>
            <person name="Oudega B."/>
            <person name="Park S.-H."/>
            <person name="Parro V."/>
            <person name="Pohl T.M."/>
            <person name="Portetelle D."/>
            <person name="Porwollik S."/>
            <person name="Prescott A.M."/>
            <person name="Presecan E."/>
            <person name="Pujic P."/>
            <person name="Purnelle B."/>
            <person name="Rapoport G."/>
            <person name="Rey M."/>
            <person name="Reynolds S."/>
            <person name="Rieger M."/>
            <person name="Rivolta C."/>
            <person name="Rocha E."/>
            <person name="Roche B."/>
            <person name="Rose M."/>
            <person name="Sadaie Y."/>
            <person name="Sato T."/>
            <person name="Scanlan E."/>
            <person name="Schleich S."/>
            <person name="Schroeter R."/>
            <person name="Scoffone F."/>
            <person name="Sekiguchi J."/>
            <person name="Sekowska A."/>
            <person name="Seror S.J."/>
            <person name="Serror P."/>
            <person name="Shin B.-S."/>
            <person name="Soldo B."/>
            <person name="Sorokin A."/>
            <person name="Tacconi E."/>
            <person name="Takagi T."/>
            <person name="Takahashi H."/>
            <person name="Takemaru K."/>
            <person name="Takeuchi M."/>
            <person name="Tamakoshi A."/>
            <person name="Tanaka T."/>
            <person name="Terpstra P."/>
            <person name="Tognoni A."/>
            <person name="Tosato V."/>
            <person name="Uchiyama S."/>
            <person name="Vandenbol M."/>
            <person name="Vannier F."/>
            <person name="Vassarotti A."/>
            <person name="Viari A."/>
            <person name="Wambutt R."/>
            <person name="Wedler E."/>
            <person name="Wedler H."/>
            <person name="Weitzenegger T."/>
            <person name="Winters P."/>
            <person name="Wipat A."/>
            <person name="Yamamoto H."/>
            <person name="Yamane K."/>
            <person name="Yasumoto K."/>
            <person name="Yata K."/>
            <person name="Yoshida K."/>
            <person name="Yoshikawa H.-F."/>
            <person name="Zumstein E."/>
            <person name="Yoshikawa H."/>
            <person name="Danchin A."/>
        </authorList>
    </citation>
    <scope>NUCLEOTIDE SEQUENCE [LARGE SCALE GENOMIC DNA]</scope>
    <source>
        <strain>168</strain>
    </source>
</reference>
<dbReference type="EMBL" id="Z18629">
    <property type="protein sequence ID" value="CAA79227.1"/>
    <property type="molecule type" value="Genomic_DNA"/>
</dbReference>
<dbReference type="EMBL" id="U56901">
    <property type="protein sequence ID" value="AAC44941.1"/>
    <property type="molecule type" value="Genomic_DNA"/>
</dbReference>
<dbReference type="EMBL" id="AL009126">
    <property type="protein sequence ID" value="CAB15563.1"/>
    <property type="molecule type" value="Genomic_DNA"/>
</dbReference>
<dbReference type="PIR" id="I40388">
    <property type="entry name" value="I40388"/>
</dbReference>
<dbReference type="RefSeq" id="NP_391426.1">
    <property type="nucleotide sequence ID" value="NC_000964.3"/>
</dbReference>
<dbReference type="RefSeq" id="WP_003227989.1">
    <property type="nucleotide sequence ID" value="NZ_OZ025638.1"/>
</dbReference>
<dbReference type="PDB" id="4WAI">
    <property type="method" value="X-ray"/>
    <property type="resolution" value="2.43 A"/>
    <property type="chains" value="A/B/C/D=1-98"/>
</dbReference>
<dbReference type="PDBsum" id="4WAI"/>
<dbReference type="SMR" id="P39146"/>
<dbReference type="FunCoup" id="P39146">
    <property type="interactions" value="59"/>
</dbReference>
<dbReference type="STRING" id="224308.BSU35460"/>
<dbReference type="PaxDb" id="224308-BSU35460"/>
<dbReference type="EnsemblBacteria" id="CAB15563">
    <property type="protein sequence ID" value="CAB15563"/>
    <property type="gene ID" value="BSU_35460"/>
</dbReference>
<dbReference type="GeneID" id="936749"/>
<dbReference type="KEGG" id="bsu:BSU35460"/>
<dbReference type="PATRIC" id="fig|224308.179.peg.3837"/>
<dbReference type="eggNOG" id="ENOG5032ZR4">
    <property type="taxonomic scope" value="Bacteria"/>
</dbReference>
<dbReference type="InParanoid" id="P39146"/>
<dbReference type="OrthoDB" id="5616024at2"/>
<dbReference type="BioCyc" id="BSUB:BSU35460-MONOMER"/>
<dbReference type="EvolutionaryTrace" id="P39146"/>
<dbReference type="Proteomes" id="UP000001570">
    <property type="component" value="Chromosome"/>
</dbReference>
<dbReference type="GO" id="GO:0030420">
    <property type="term" value="P:establishment of competence for transformation"/>
    <property type="evidence" value="ECO:0007669"/>
    <property type="project" value="UniProtKB-KW"/>
</dbReference>
<dbReference type="InterPro" id="IPR019657">
    <property type="entry name" value="ComFB"/>
</dbReference>
<dbReference type="Pfam" id="PF10719">
    <property type="entry name" value="ComFB"/>
    <property type="match status" value="1"/>
</dbReference>
<gene>
    <name type="primary">comFB</name>
    <name evidence="2" type="synonym">comFORF2</name>
    <name type="ordered locus">BSU35460</name>
</gene>
<sequence length="98" mass="10976">MLVNSKEIVMKELLDRYMDQLHMACTCQVCQNDVLALSLNKVSPSYVTDFKKIAYTKAELVDKQKNTAMLVILAESAAVVSESPSDLCQTKQEEAFIN</sequence>
<evidence type="ECO:0000269" key="1">
    <source>
    </source>
</evidence>
<evidence type="ECO:0000303" key="2">
    <source>
    </source>
</evidence>
<evidence type="ECO:0000305" key="3"/>
<evidence type="ECO:0000305" key="4">
    <source>
    </source>
</evidence>
<evidence type="ECO:0007829" key="5">
    <source>
        <dbReference type="PDB" id="4WAI"/>
    </source>
</evidence>
<protein>
    <recommendedName>
        <fullName evidence="3">Competence protein ComFB</fullName>
    </recommendedName>
    <alternativeName>
        <fullName>ComF operon protein 2</fullName>
    </alternativeName>
</protein>
<proteinExistence type="evidence at protein level"/>
<name>COMFB_BACSU</name>
<feature type="chain" id="PRO_0000090010" description="Competence protein ComFB">
    <location>
        <begin position="1"/>
        <end position="98"/>
    </location>
</feature>
<feature type="helix" evidence="5">
    <location>
        <begin position="5"/>
        <end position="16"/>
    </location>
</feature>
<feature type="helix" evidence="5">
    <location>
        <begin position="18"/>
        <end position="21"/>
    </location>
</feature>
<feature type="helix" evidence="5">
    <location>
        <begin position="28"/>
        <end position="39"/>
    </location>
</feature>
<feature type="strand" evidence="5">
    <location>
        <begin position="46"/>
        <end position="48"/>
    </location>
</feature>
<feature type="helix" evidence="5">
    <location>
        <begin position="50"/>
        <end position="59"/>
    </location>
</feature>
<feature type="turn" evidence="5">
    <location>
        <begin position="62"/>
        <end position="65"/>
    </location>
</feature>
<feature type="helix" evidence="5">
    <location>
        <begin position="66"/>
        <end position="82"/>
    </location>
</feature>